<keyword id="KW-0408">Iron</keyword>
<keyword id="KW-0411">Iron-sulfur</keyword>
<keyword id="KW-0479">Metal-binding</keyword>
<keyword id="KW-1185">Reference proteome</keyword>
<evidence type="ECO:0000255" key="1">
    <source>
        <dbReference type="HAMAP-Rule" id="MF_01380"/>
    </source>
</evidence>
<organism>
    <name type="scientific">Nitrosomonas europaea (strain ATCC 19718 / CIP 103999 / KCTC 2705 / NBRC 14298)</name>
    <dbReference type="NCBI Taxonomy" id="228410"/>
    <lineage>
        <taxon>Bacteria</taxon>
        <taxon>Pseudomonadati</taxon>
        <taxon>Pseudomonadota</taxon>
        <taxon>Betaproteobacteria</taxon>
        <taxon>Nitrosomonadales</taxon>
        <taxon>Nitrosomonadaceae</taxon>
        <taxon>Nitrosomonas</taxon>
    </lineage>
</organism>
<proteinExistence type="inferred from homology"/>
<protein>
    <recommendedName>
        <fullName evidence="1">Putative iron-sulfur cluster insertion protein ErpA</fullName>
    </recommendedName>
</protein>
<feature type="chain" id="PRO_0000311512" description="Putative iron-sulfur cluster insertion protein ErpA">
    <location>
        <begin position="1"/>
        <end position="121"/>
    </location>
</feature>
<feature type="binding site" evidence="1">
    <location>
        <position position="49"/>
    </location>
    <ligand>
        <name>iron-sulfur cluster</name>
        <dbReference type="ChEBI" id="CHEBI:30408"/>
    </ligand>
</feature>
<feature type="binding site" evidence="1">
    <location>
        <position position="113"/>
    </location>
    <ligand>
        <name>iron-sulfur cluster</name>
        <dbReference type="ChEBI" id="CHEBI:30408"/>
    </ligand>
</feature>
<feature type="binding site" evidence="1">
    <location>
        <position position="115"/>
    </location>
    <ligand>
        <name>iron-sulfur cluster</name>
        <dbReference type="ChEBI" id="CHEBI:30408"/>
    </ligand>
</feature>
<comment type="function">
    <text evidence="1">Required for insertion of 4Fe-4S clusters.</text>
</comment>
<comment type="cofactor">
    <cofactor evidence="1">
        <name>iron-sulfur cluster</name>
        <dbReference type="ChEBI" id="CHEBI:30408"/>
    </cofactor>
    <text evidence="1">Binds 1 iron-sulfur cluster per subunit.</text>
</comment>
<comment type="subunit">
    <text evidence="1">Homodimer.</text>
</comment>
<comment type="similarity">
    <text evidence="1">Belongs to the HesB/IscA family.</text>
</comment>
<name>ERPA_NITEU</name>
<reference key="1">
    <citation type="journal article" date="2003" name="J. Bacteriol.">
        <title>Complete genome sequence of the ammonia-oxidizing bacterium and obligate chemolithoautotroph Nitrosomonas europaea.</title>
        <authorList>
            <person name="Chain P."/>
            <person name="Lamerdin J.E."/>
            <person name="Larimer F.W."/>
            <person name="Regala W."/>
            <person name="Lao V."/>
            <person name="Land M.L."/>
            <person name="Hauser L."/>
            <person name="Hooper A.B."/>
            <person name="Klotz M.G."/>
            <person name="Norton J."/>
            <person name="Sayavedra-Soto L.A."/>
            <person name="Arciero D.M."/>
            <person name="Hommes N.G."/>
            <person name="Whittaker M.M."/>
            <person name="Arp D.J."/>
        </authorList>
    </citation>
    <scope>NUCLEOTIDE SEQUENCE [LARGE SCALE GENOMIC DNA]</scope>
    <source>
        <strain>ATCC 19718 / CIP 103999 / KCTC 2705 / NBRC 14298</strain>
    </source>
</reference>
<sequence>MGTTIHEETSAAQPPLNFTDGAASKVKELIEEEDNQALKLRVFVSGGGCSGFQYGFTFDEIVNEDDFVMEKQGVKLLVDSMSFQYLVGAEIDYQESAQGAQFVIKNPSAASTCGCGSSFSV</sequence>
<gene>
    <name evidence="1" type="primary">erpA</name>
    <name type="ordered locus">NE1428</name>
</gene>
<dbReference type="EMBL" id="AL954747">
    <property type="protein sequence ID" value="CAD85339.1"/>
    <property type="molecule type" value="Genomic_DNA"/>
</dbReference>
<dbReference type="RefSeq" id="WP_011111996.1">
    <property type="nucleotide sequence ID" value="NC_004757.1"/>
</dbReference>
<dbReference type="SMR" id="Q82UQ4"/>
<dbReference type="STRING" id="228410.NE1428"/>
<dbReference type="GeneID" id="87104602"/>
<dbReference type="KEGG" id="neu:NE1428"/>
<dbReference type="eggNOG" id="COG0316">
    <property type="taxonomic scope" value="Bacteria"/>
</dbReference>
<dbReference type="HOGENOM" id="CLU_069054_5_3_4"/>
<dbReference type="OrthoDB" id="9801228at2"/>
<dbReference type="PhylomeDB" id="Q82UQ4"/>
<dbReference type="Proteomes" id="UP000001416">
    <property type="component" value="Chromosome"/>
</dbReference>
<dbReference type="GO" id="GO:0051537">
    <property type="term" value="F:2 iron, 2 sulfur cluster binding"/>
    <property type="evidence" value="ECO:0007669"/>
    <property type="project" value="TreeGrafter"/>
</dbReference>
<dbReference type="GO" id="GO:0051539">
    <property type="term" value="F:4 iron, 4 sulfur cluster binding"/>
    <property type="evidence" value="ECO:0007669"/>
    <property type="project" value="TreeGrafter"/>
</dbReference>
<dbReference type="GO" id="GO:0005506">
    <property type="term" value="F:iron ion binding"/>
    <property type="evidence" value="ECO:0007669"/>
    <property type="project" value="UniProtKB-UniRule"/>
</dbReference>
<dbReference type="GO" id="GO:0016226">
    <property type="term" value="P:iron-sulfur cluster assembly"/>
    <property type="evidence" value="ECO:0007669"/>
    <property type="project" value="UniProtKB-UniRule"/>
</dbReference>
<dbReference type="FunFam" id="2.60.300.12:FF:000002">
    <property type="entry name" value="Iron-sulfur cluster insertion protein ErpA"/>
    <property type="match status" value="1"/>
</dbReference>
<dbReference type="Gene3D" id="2.60.300.12">
    <property type="entry name" value="HesB-like domain"/>
    <property type="match status" value="1"/>
</dbReference>
<dbReference type="HAMAP" id="MF_01380">
    <property type="entry name" value="Fe_S_insert_ErpA"/>
    <property type="match status" value="1"/>
</dbReference>
<dbReference type="InterPro" id="IPR000361">
    <property type="entry name" value="FeS_biogenesis"/>
</dbReference>
<dbReference type="InterPro" id="IPR016092">
    <property type="entry name" value="FeS_cluster_insertion"/>
</dbReference>
<dbReference type="InterPro" id="IPR017870">
    <property type="entry name" value="FeS_cluster_insertion_CS"/>
</dbReference>
<dbReference type="InterPro" id="IPR023063">
    <property type="entry name" value="FeS_cluster_insertion_RrpA"/>
</dbReference>
<dbReference type="InterPro" id="IPR035903">
    <property type="entry name" value="HesB-like_dom_sf"/>
</dbReference>
<dbReference type="NCBIfam" id="TIGR00049">
    <property type="entry name" value="iron-sulfur cluster assembly accessory protein"/>
    <property type="match status" value="1"/>
</dbReference>
<dbReference type="NCBIfam" id="NF010147">
    <property type="entry name" value="PRK13623.1"/>
    <property type="match status" value="1"/>
</dbReference>
<dbReference type="PANTHER" id="PTHR43011">
    <property type="entry name" value="IRON-SULFUR CLUSTER ASSEMBLY 2 HOMOLOG, MITOCHONDRIAL"/>
    <property type="match status" value="1"/>
</dbReference>
<dbReference type="PANTHER" id="PTHR43011:SF1">
    <property type="entry name" value="IRON-SULFUR CLUSTER ASSEMBLY 2 HOMOLOG, MITOCHONDRIAL"/>
    <property type="match status" value="1"/>
</dbReference>
<dbReference type="Pfam" id="PF01521">
    <property type="entry name" value="Fe-S_biosyn"/>
    <property type="match status" value="1"/>
</dbReference>
<dbReference type="SUPFAM" id="SSF89360">
    <property type="entry name" value="HesB-like domain"/>
    <property type="match status" value="1"/>
</dbReference>
<dbReference type="PROSITE" id="PS01152">
    <property type="entry name" value="HESB"/>
    <property type="match status" value="1"/>
</dbReference>
<accession>Q82UQ4</accession>